<sequence>MAQTLSFNGRRRVRKFFGKIPEVAEMPNLIEVQKASYDQFLMVDEPKGGRPDEGLNAVFKSVFPITDFSGASMLEFVSYEFEAPKFDVEECRQRDLTYAAPLKVTLRLIVFDIDEDTGAKSIKDIKEQSVYMGDMPLMTNNGTFIVNGTERVIVSQMHRSPGVFFDHDKGKSHSSGKLLFAARVIPYRGSWLDIEFDAKDIVYARIDRRRKLPVTSLLMALGMDGEEILSTFYTKATYERSGDGWRIPFQPEALKNAKVITDMIDADTGEVVVEGGKKLTPRLIRQLVDKGLKALKATDEDLYGNYLAEDIVNYSTGEIYLEAGDEIDEKTLGLILQSGFDEIPVLNIDHVNVGAYIRNTLSADKNQNRQEALFDIYRVMRPGEPPTMDSAEAMFNSLFFDAERYDLSAVGRVKMNMRLDLDAEDTVRTLRKEDILAVVKMLVELRDGKGEIDDIDNLGNRRVRSVGELMENQYRLGLLRMERAIKERMSSIEIDTVMPQDLINAKPAAAAVREFFGSSQLSQFMDQVNPLSEITHKRRLSALGPGGLTRERAGFEVRDVHPTHYGRICPIETPEGPNIGLINSLATFARVNKYGFIESPYRKIIDGKVTTDVIYLSAMEEAKYYVAQANAELDGEGAFTEEFVVCRHSGEVMLAPRDNINLMDVSPKQLVSVAAALIPFLENDDANRALMGSNMQRQAVPLLRAEAPFVGTGMEPIVARDSGAAIAARRGGVVDQVDATRIVIRATEDLDAGKSGVDIYRLQKFQRSNQNTCVNQRPLVSVGDAISKGDIIADGPSTDLGDLALGRNALVAFMPWNGYNYEDSILMSERIVSDDVFTSIHIEEFEVMARDTKLGPEEITRDIPNVSEEALKNLDEAGIVYIGAEVQPGDILVGKITPKGESPMTPEEKLLRAIFGEKASDVRDTSMRMPPGTFGTIVEVRVFNRHGVEKDERAMAIEREEIERLAKDRDDEQAILDRNVYGRLIDMLRGHVSIAGPKGFKKGVELSNAVVSEYPRSQWWMFAVEDEKAQSELEALRGQYDESKSRLEQRFMDKVEKVQRGDEMPPGVMKMVKVFVAVKRKIQPGDKMAGRHGNKGVVSRIVPVEDMPFLEDGTHVDICLNPLGVPSRMNVGQILETHLAWACAGMGKKIGEMLEEYRKTMDISELRSELTEIYASEANDEVQRFDDDSLVKLAEEAKRGVSIATPVFDGAHEPDVAAMLKKAGLHESGQSVLYDGRTGEPFDRKVTVGYMYMIKLNHLVDDKIHARSIGPYSLVTQQPLGGKAQFGGQRFGEMEVWALEAYGAAYTLQEMLTVKSDDVAGRTKVYEAIVRGDDTFEAGIPESFNVLVKEMRSLGLSVELENSKIENQSEDQLPDAAE</sequence>
<dbReference type="EC" id="2.7.7.6" evidence="1"/>
<dbReference type="EMBL" id="AE007869">
    <property type="protein sequence ID" value="AAK87716.2"/>
    <property type="molecule type" value="Genomic_DNA"/>
</dbReference>
<dbReference type="PIR" id="AB2817">
    <property type="entry name" value="AB2817"/>
</dbReference>
<dbReference type="PIR" id="C97595">
    <property type="entry name" value="C97595"/>
</dbReference>
<dbReference type="RefSeq" id="NP_354931.2">
    <property type="nucleotide sequence ID" value="NC_003062.2"/>
</dbReference>
<dbReference type="RefSeq" id="WP_006316439.1">
    <property type="nucleotide sequence ID" value="NC_003062.2"/>
</dbReference>
<dbReference type="SMR" id="Q8UE08"/>
<dbReference type="STRING" id="176299.Atu1956"/>
<dbReference type="EnsemblBacteria" id="AAK87716">
    <property type="protein sequence ID" value="AAK87716"/>
    <property type="gene ID" value="Atu1956"/>
</dbReference>
<dbReference type="GeneID" id="1139412"/>
<dbReference type="KEGG" id="atu:Atu1956"/>
<dbReference type="PATRIC" id="fig|176299.10.peg.1968"/>
<dbReference type="eggNOG" id="COG0085">
    <property type="taxonomic scope" value="Bacteria"/>
</dbReference>
<dbReference type="HOGENOM" id="CLU_000524_4_0_5"/>
<dbReference type="OrthoDB" id="9803954at2"/>
<dbReference type="PhylomeDB" id="Q8UE08"/>
<dbReference type="BioCyc" id="AGRO:ATU1956-MONOMER"/>
<dbReference type="Proteomes" id="UP000000813">
    <property type="component" value="Chromosome circular"/>
</dbReference>
<dbReference type="GO" id="GO:0000428">
    <property type="term" value="C:DNA-directed RNA polymerase complex"/>
    <property type="evidence" value="ECO:0007669"/>
    <property type="project" value="UniProtKB-KW"/>
</dbReference>
<dbReference type="GO" id="GO:0003677">
    <property type="term" value="F:DNA binding"/>
    <property type="evidence" value="ECO:0007669"/>
    <property type="project" value="UniProtKB-UniRule"/>
</dbReference>
<dbReference type="GO" id="GO:0003899">
    <property type="term" value="F:DNA-directed RNA polymerase activity"/>
    <property type="evidence" value="ECO:0007669"/>
    <property type="project" value="UniProtKB-UniRule"/>
</dbReference>
<dbReference type="GO" id="GO:0032549">
    <property type="term" value="F:ribonucleoside binding"/>
    <property type="evidence" value="ECO:0007669"/>
    <property type="project" value="InterPro"/>
</dbReference>
<dbReference type="GO" id="GO:0006351">
    <property type="term" value="P:DNA-templated transcription"/>
    <property type="evidence" value="ECO:0007669"/>
    <property type="project" value="UniProtKB-UniRule"/>
</dbReference>
<dbReference type="CDD" id="cd00653">
    <property type="entry name" value="RNA_pol_B_RPB2"/>
    <property type="match status" value="1"/>
</dbReference>
<dbReference type="FunFam" id="2.40.50.100:FF:000006">
    <property type="entry name" value="DNA-directed RNA polymerase subunit beta"/>
    <property type="match status" value="1"/>
</dbReference>
<dbReference type="FunFam" id="3.90.1800.10:FF:000001">
    <property type="entry name" value="DNA-directed RNA polymerase subunit beta"/>
    <property type="match status" value="1"/>
</dbReference>
<dbReference type="Gene3D" id="2.40.50.100">
    <property type="match status" value="1"/>
</dbReference>
<dbReference type="Gene3D" id="2.40.50.150">
    <property type="match status" value="1"/>
</dbReference>
<dbReference type="Gene3D" id="3.90.1100.10">
    <property type="match status" value="2"/>
</dbReference>
<dbReference type="Gene3D" id="2.30.150.10">
    <property type="entry name" value="DNA-directed RNA polymerase, beta subunit, external 1 domain"/>
    <property type="match status" value="1"/>
</dbReference>
<dbReference type="Gene3D" id="2.40.270.10">
    <property type="entry name" value="DNA-directed RNA polymerase, subunit 2, domain 6"/>
    <property type="match status" value="1"/>
</dbReference>
<dbReference type="Gene3D" id="3.90.1800.10">
    <property type="entry name" value="RNA polymerase alpha subunit dimerisation domain"/>
    <property type="match status" value="1"/>
</dbReference>
<dbReference type="Gene3D" id="3.90.1110.10">
    <property type="entry name" value="RNA polymerase Rpb2, domain 2"/>
    <property type="match status" value="1"/>
</dbReference>
<dbReference type="HAMAP" id="MF_01321">
    <property type="entry name" value="RNApol_bact_RpoB"/>
    <property type="match status" value="1"/>
</dbReference>
<dbReference type="InterPro" id="IPR042107">
    <property type="entry name" value="DNA-dir_RNA_pol_bsu_ext_1_sf"/>
</dbReference>
<dbReference type="InterPro" id="IPR019462">
    <property type="entry name" value="DNA-dir_RNA_pol_bsu_external_1"/>
</dbReference>
<dbReference type="InterPro" id="IPR015712">
    <property type="entry name" value="DNA-dir_RNA_pol_su2"/>
</dbReference>
<dbReference type="InterPro" id="IPR007120">
    <property type="entry name" value="DNA-dir_RNAP_su2_dom"/>
</dbReference>
<dbReference type="InterPro" id="IPR037033">
    <property type="entry name" value="DNA-dir_RNAP_su2_hyb_sf"/>
</dbReference>
<dbReference type="InterPro" id="IPR010243">
    <property type="entry name" value="RNA_pol_bsu_bac"/>
</dbReference>
<dbReference type="InterPro" id="IPR007121">
    <property type="entry name" value="RNA_pol_bsu_CS"/>
</dbReference>
<dbReference type="InterPro" id="IPR007644">
    <property type="entry name" value="RNA_pol_bsu_protrusion"/>
</dbReference>
<dbReference type="InterPro" id="IPR007642">
    <property type="entry name" value="RNA_pol_Rpb2_2"/>
</dbReference>
<dbReference type="InterPro" id="IPR037034">
    <property type="entry name" value="RNA_pol_Rpb2_2_sf"/>
</dbReference>
<dbReference type="InterPro" id="IPR007645">
    <property type="entry name" value="RNA_pol_Rpb2_3"/>
</dbReference>
<dbReference type="InterPro" id="IPR007641">
    <property type="entry name" value="RNA_pol_Rpb2_7"/>
</dbReference>
<dbReference type="InterPro" id="IPR014724">
    <property type="entry name" value="RNA_pol_RPB2_OB-fold"/>
</dbReference>
<dbReference type="NCBIfam" id="NF001616">
    <property type="entry name" value="PRK00405.1"/>
    <property type="match status" value="1"/>
</dbReference>
<dbReference type="NCBIfam" id="TIGR02013">
    <property type="entry name" value="rpoB"/>
    <property type="match status" value="1"/>
</dbReference>
<dbReference type="PANTHER" id="PTHR20856">
    <property type="entry name" value="DNA-DIRECTED RNA POLYMERASE I SUBUNIT 2"/>
    <property type="match status" value="1"/>
</dbReference>
<dbReference type="Pfam" id="PF04563">
    <property type="entry name" value="RNA_pol_Rpb2_1"/>
    <property type="match status" value="1"/>
</dbReference>
<dbReference type="Pfam" id="PF04561">
    <property type="entry name" value="RNA_pol_Rpb2_2"/>
    <property type="match status" value="2"/>
</dbReference>
<dbReference type="Pfam" id="PF04565">
    <property type="entry name" value="RNA_pol_Rpb2_3"/>
    <property type="match status" value="1"/>
</dbReference>
<dbReference type="Pfam" id="PF10385">
    <property type="entry name" value="RNA_pol_Rpb2_45"/>
    <property type="match status" value="1"/>
</dbReference>
<dbReference type="Pfam" id="PF00562">
    <property type="entry name" value="RNA_pol_Rpb2_6"/>
    <property type="match status" value="1"/>
</dbReference>
<dbReference type="Pfam" id="PF04560">
    <property type="entry name" value="RNA_pol_Rpb2_7"/>
    <property type="match status" value="1"/>
</dbReference>
<dbReference type="SUPFAM" id="SSF64484">
    <property type="entry name" value="beta and beta-prime subunits of DNA dependent RNA-polymerase"/>
    <property type="match status" value="1"/>
</dbReference>
<dbReference type="PROSITE" id="PS01166">
    <property type="entry name" value="RNA_POL_BETA"/>
    <property type="match status" value="1"/>
</dbReference>
<accession>Q8UE08</accession>
<gene>
    <name evidence="1" type="primary">rpoB</name>
    <name type="ordered locus">Atu1956</name>
    <name type="ORF">AGR_C_3569</name>
</gene>
<protein>
    <recommendedName>
        <fullName evidence="1">DNA-directed RNA polymerase subunit beta</fullName>
        <shortName evidence="1">RNAP subunit beta</shortName>
        <ecNumber evidence="1">2.7.7.6</ecNumber>
    </recommendedName>
    <alternativeName>
        <fullName evidence="1">RNA polymerase subunit beta</fullName>
    </alternativeName>
    <alternativeName>
        <fullName evidence="1">Transcriptase subunit beta</fullName>
    </alternativeName>
</protein>
<proteinExistence type="inferred from homology"/>
<organism>
    <name type="scientific">Agrobacterium fabrum (strain C58 / ATCC 33970)</name>
    <name type="common">Agrobacterium tumefaciens (strain C58)</name>
    <dbReference type="NCBI Taxonomy" id="176299"/>
    <lineage>
        <taxon>Bacteria</taxon>
        <taxon>Pseudomonadati</taxon>
        <taxon>Pseudomonadota</taxon>
        <taxon>Alphaproteobacteria</taxon>
        <taxon>Hyphomicrobiales</taxon>
        <taxon>Rhizobiaceae</taxon>
        <taxon>Rhizobium/Agrobacterium group</taxon>
        <taxon>Agrobacterium</taxon>
        <taxon>Agrobacterium tumefaciens complex</taxon>
    </lineage>
</organism>
<keyword id="KW-0240">DNA-directed RNA polymerase</keyword>
<keyword id="KW-0548">Nucleotidyltransferase</keyword>
<keyword id="KW-1185">Reference proteome</keyword>
<keyword id="KW-0804">Transcription</keyword>
<keyword id="KW-0808">Transferase</keyword>
<feature type="chain" id="PRO_0000047850" description="DNA-directed RNA polymerase subunit beta">
    <location>
        <begin position="1"/>
        <end position="1378"/>
    </location>
</feature>
<name>RPOB_AGRFC</name>
<reference key="1">
    <citation type="journal article" date="2001" name="Science">
        <title>The genome of the natural genetic engineer Agrobacterium tumefaciens C58.</title>
        <authorList>
            <person name="Wood D.W."/>
            <person name="Setubal J.C."/>
            <person name="Kaul R."/>
            <person name="Monks D.E."/>
            <person name="Kitajima J.P."/>
            <person name="Okura V.K."/>
            <person name="Zhou Y."/>
            <person name="Chen L."/>
            <person name="Wood G.E."/>
            <person name="Almeida N.F. Jr."/>
            <person name="Woo L."/>
            <person name="Chen Y."/>
            <person name="Paulsen I.T."/>
            <person name="Eisen J.A."/>
            <person name="Karp P.D."/>
            <person name="Bovee D. Sr."/>
            <person name="Chapman P."/>
            <person name="Clendenning J."/>
            <person name="Deatherage G."/>
            <person name="Gillet W."/>
            <person name="Grant C."/>
            <person name="Kutyavin T."/>
            <person name="Levy R."/>
            <person name="Li M.-J."/>
            <person name="McClelland E."/>
            <person name="Palmieri A."/>
            <person name="Raymond C."/>
            <person name="Rouse G."/>
            <person name="Saenphimmachak C."/>
            <person name="Wu Z."/>
            <person name="Romero P."/>
            <person name="Gordon D."/>
            <person name="Zhang S."/>
            <person name="Yoo H."/>
            <person name="Tao Y."/>
            <person name="Biddle P."/>
            <person name="Jung M."/>
            <person name="Krespan W."/>
            <person name="Perry M."/>
            <person name="Gordon-Kamm B."/>
            <person name="Liao L."/>
            <person name="Kim S."/>
            <person name="Hendrick C."/>
            <person name="Zhao Z.-Y."/>
            <person name="Dolan M."/>
            <person name="Chumley F."/>
            <person name="Tingey S.V."/>
            <person name="Tomb J.-F."/>
            <person name="Gordon M.P."/>
            <person name="Olson M.V."/>
            <person name="Nester E.W."/>
        </authorList>
    </citation>
    <scope>NUCLEOTIDE SEQUENCE [LARGE SCALE GENOMIC DNA]</scope>
    <source>
        <strain>C58 / ATCC 33970</strain>
    </source>
</reference>
<reference key="2">
    <citation type="journal article" date="2001" name="Science">
        <title>Genome sequence of the plant pathogen and biotechnology agent Agrobacterium tumefaciens C58.</title>
        <authorList>
            <person name="Goodner B."/>
            <person name="Hinkle G."/>
            <person name="Gattung S."/>
            <person name="Miller N."/>
            <person name="Blanchard M."/>
            <person name="Qurollo B."/>
            <person name="Goldman B.S."/>
            <person name="Cao Y."/>
            <person name="Askenazi M."/>
            <person name="Halling C."/>
            <person name="Mullin L."/>
            <person name="Houmiel K."/>
            <person name="Gordon J."/>
            <person name="Vaudin M."/>
            <person name="Iartchouk O."/>
            <person name="Epp A."/>
            <person name="Liu F."/>
            <person name="Wollam C."/>
            <person name="Allinger M."/>
            <person name="Doughty D."/>
            <person name="Scott C."/>
            <person name="Lappas C."/>
            <person name="Markelz B."/>
            <person name="Flanagan C."/>
            <person name="Crowell C."/>
            <person name="Gurson J."/>
            <person name="Lomo C."/>
            <person name="Sear C."/>
            <person name="Strub G."/>
            <person name="Cielo C."/>
            <person name="Slater S."/>
        </authorList>
    </citation>
    <scope>NUCLEOTIDE SEQUENCE [LARGE SCALE GENOMIC DNA]</scope>
    <source>
        <strain>C58 / ATCC 33970</strain>
    </source>
</reference>
<comment type="function">
    <text evidence="1">DNA-dependent RNA polymerase catalyzes the transcription of DNA into RNA using the four ribonucleoside triphosphates as substrates.</text>
</comment>
<comment type="catalytic activity">
    <reaction evidence="1">
        <text>RNA(n) + a ribonucleoside 5'-triphosphate = RNA(n+1) + diphosphate</text>
        <dbReference type="Rhea" id="RHEA:21248"/>
        <dbReference type="Rhea" id="RHEA-COMP:14527"/>
        <dbReference type="Rhea" id="RHEA-COMP:17342"/>
        <dbReference type="ChEBI" id="CHEBI:33019"/>
        <dbReference type="ChEBI" id="CHEBI:61557"/>
        <dbReference type="ChEBI" id="CHEBI:140395"/>
        <dbReference type="EC" id="2.7.7.6"/>
    </reaction>
</comment>
<comment type="subunit">
    <text evidence="1">The RNAP catalytic core consists of 2 alpha, 1 beta, 1 beta' and 1 omega subunit. When a sigma factor is associated with the core the holoenzyme is formed, which can initiate transcription.</text>
</comment>
<comment type="similarity">
    <text evidence="1">Belongs to the RNA polymerase beta chain family.</text>
</comment>
<evidence type="ECO:0000255" key="1">
    <source>
        <dbReference type="HAMAP-Rule" id="MF_01321"/>
    </source>
</evidence>